<reference key="1">
    <citation type="journal article" date="2005" name="Nat. Biotechnol.">
        <title>Complete genome sequence of the plant commensal Pseudomonas fluorescens Pf-5.</title>
        <authorList>
            <person name="Paulsen I.T."/>
            <person name="Press C.M."/>
            <person name="Ravel J."/>
            <person name="Kobayashi D.Y."/>
            <person name="Myers G.S.A."/>
            <person name="Mavrodi D.V."/>
            <person name="DeBoy R.T."/>
            <person name="Seshadri R."/>
            <person name="Ren Q."/>
            <person name="Madupu R."/>
            <person name="Dodson R.J."/>
            <person name="Durkin A.S."/>
            <person name="Brinkac L.M."/>
            <person name="Daugherty S.C."/>
            <person name="Sullivan S.A."/>
            <person name="Rosovitz M.J."/>
            <person name="Gwinn M.L."/>
            <person name="Zhou L."/>
            <person name="Schneider D.J."/>
            <person name="Cartinhour S.W."/>
            <person name="Nelson W.C."/>
            <person name="Weidman J."/>
            <person name="Watkins K."/>
            <person name="Tran K."/>
            <person name="Khouri H."/>
            <person name="Pierson E.A."/>
            <person name="Pierson L.S. III"/>
            <person name="Thomashow L.S."/>
            <person name="Loper J.E."/>
        </authorList>
    </citation>
    <scope>NUCLEOTIDE SEQUENCE [LARGE SCALE GENOMIC DNA]</scope>
    <source>
        <strain>ATCC BAA-477 / NRRL B-23932 / Pf-5</strain>
    </source>
</reference>
<comment type="function">
    <text evidence="1">Protease subunit of a proteasome-like degradation complex believed to be a general protein degrading machinery.</text>
</comment>
<comment type="catalytic activity">
    <reaction evidence="1">
        <text>ATP-dependent cleavage of peptide bonds with broad specificity.</text>
        <dbReference type="EC" id="3.4.25.2"/>
    </reaction>
</comment>
<comment type="activity regulation">
    <text evidence="1">Allosterically activated by HslU binding.</text>
</comment>
<comment type="subunit">
    <text evidence="1">A double ring-shaped homohexamer of HslV is capped on each side by a ring-shaped HslU homohexamer. The assembly of the HslU/HslV complex is dependent on binding of ATP.</text>
</comment>
<comment type="subcellular location">
    <subcellularLocation>
        <location evidence="1">Cytoplasm</location>
    </subcellularLocation>
</comment>
<comment type="similarity">
    <text evidence="1">Belongs to the peptidase T1B family. HslV subfamily.</text>
</comment>
<feature type="chain" id="PRO_1000012650" description="ATP-dependent protease subunit HslV">
    <location>
        <begin position="1"/>
        <end position="176"/>
    </location>
</feature>
<feature type="active site" evidence="1">
    <location>
        <position position="2"/>
    </location>
</feature>
<feature type="binding site" evidence="1">
    <location>
        <position position="157"/>
    </location>
    <ligand>
        <name>Na(+)</name>
        <dbReference type="ChEBI" id="CHEBI:29101"/>
    </ligand>
</feature>
<feature type="binding site" evidence="1">
    <location>
        <position position="160"/>
    </location>
    <ligand>
        <name>Na(+)</name>
        <dbReference type="ChEBI" id="CHEBI:29101"/>
    </ligand>
</feature>
<feature type="binding site" evidence="1">
    <location>
        <position position="163"/>
    </location>
    <ligand>
        <name>Na(+)</name>
        <dbReference type="ChEBI" id="CHEBI:29101"/>
    </ligand>
</feature>
<gene>
    <name evidence="1" type="primary">hslV</name>
    <name type="ordered locus">PFL_0437</name>
</gene>
<dbReference type="EC" id="3.4.25.2" evidence="1"/>
<dbReference type="EMBL" id="CP000076">
    <property type="protein sequence ID" value="AAY95846.1"/>
    <property type="molecule type" value="Genomic_DNA"/>
</dbReference>
<dbReference type="RefSeq" id="WP_003186641.1">
    <property type="nucleotide sequence ID" value="NC_004129.6"/>
</dbReference>
<dbReference type="SMR" id="Q4KJK2"/>
<dbReference type="STRING" id="220664.PFL_0437"/>
<dbReference type="MEROPS" id="T01.007"/>
<dbReference type="GeneID" id="93401027"/>
<dbReference type="KEGG" id="pfl:PFL_0437"/>
<dbReference type="eggNOG" id="COG5405">
    <property type="taxonomic scope" value="Bacteria"/>
</dbReference>
<dbReference type="HOGENOM" id="CLU_093872_1_0_6"/>
<dbReference type="Proteomes" id="UP000008540">
    <property type="component" value="Chromosome"/>
</dbReference>
<dbReference type="GO" id="GO:0009376">
    <property type="term" value="C:HslUV protease complex"/>
    <property type="evidence" value="ECO:0007669"/>
    <property type="project" value="UniProtKB-UniRule"/>
</dbReference>
<dbReference type="GO" id="GO:0005839">
    <property type="term" value="C:proteasome core complex"/>
    <property type="evidence" value="ECO:0007669"/>
    <property type="project" value="InterPro"/>
</dbReference>
<dbReference type="GO" id="GO:0046872">
    <property type="term" value="F:metal ion binding"/>
    <property type="evidence" value="ECO:0007669"/>
    <property type="project" value="UniProtKB-KW"/>
</dbReference>
<dbReference type="GO" id="GO:0004298">
    <property type="term" value="F:threonine-type endopeptidase activity"/>
    <property type="evidence" value="ECO:0007669"/>
    <property type="project" value="UniProtKB-KW"/>
</dbReference>
<dbReference type="GO" id="GO:0051603">
    <property type="term" value="P:proteolysis involved in protein catabolic process"/>
    <property type="evidence" value="ECO:0007669"/>
    <property type="project" value="InterPro"/>
</dbReference>
<dbReference type="CDD" id="cd01913">
    <property type="entry name" value="protease_HslV"/>
    <property type="match status" value="1"/>
</dbReference>
<dbReference type="FunFam" id="3.60.20.10:FF:000002">
    <property type="entry name" value="ATP-dependent protease subunit HslV"/>
    <property type="match status" value="1"/>
</dbReference>
<dbReference type="Gene3D" id="3.60.20.10">
    <property type="entry name" value="Glutamine Phosphoribosylpyrophosphate, subunit 1, domain 1"/>
    <property type="match status" value="1"/>
</dbReference>
<dbReference type="HAMAP" id="MF_00248">
    <property type="entry name" value="HslV"/>
    <property type="match status" value="1"/>
</dbReference>
<dbReference type="InterPro" id="IPR022281">
    <property type="entry name" value="ATP-dep_Prtase_HsIV_su"/>
</dbReference>
<dbReference type="InterPro" id="IPR029055">
    <property type="entry name" value="Ntn_hydrolases_N"/>
</dbReference>
<dbReference type="InterPro" id="IPR001353">
    <property type="entry name" value="Proteasome_sua/b"/>
</dbReference>
<dbReference type="InterPro" id="IPR023333">
    <property type="entry name" value="Proteasome_suB-type"/>
</dbReference>
<dbReference type="NCBIfam" id="TIGR03692">
    <property type="entry name" value="ATP_dep_HslV"/>
    <property type="match status" value="1"/>
</dbReference>
<dbReference type="NCBIfam" id="NF003964">
    <property type="entry name" value="PRK05456.1"/>
    <property type="match status" value="1"/>
</dbReference>
<dbReference type="PANTHER" id="PTHR32194:SF0">
    <property type="entry name" value="ATP-DEPENDENT PROTEASE SUBUNIT HSLV"/>
    <property type="match status" value="1"/>
</dbReference>
<dbReference type="PANTHER" id="PTHR32194">
    <property type="entry name" value="METALLOPROTEASE TLDD"/>
    <property type="match status" value="1"/>
</dbReference>
<dbReference type="Pfam" id="PF00227">
    <property type="entry name" value="Proteasome"/>
    <property type="match status" value="1"/>
</dbReference>
<dbReference type="PIRSF" id="PIRSF039093">
    <property type="entry name" value="HslV"/>
    <property type="match status" value="1"/>
</dbReference>
<dbReference type="SUPFAM" id="SSF56235">
    <property type="entry name" value="N-terminal nucleophile aminohydrolases (Ntn hydrolases)"/>
    <property type="match status" value="1"/>
</dbReference>
<dbReference type="PROSITE" id="PS51476">
    <property type="entry name" value="PROTEASOME_BETA_2"/>
    <property type="match status" value="1"/>
</dbReference>
<proteinExistence type="inferred from homology"/>
<accession>Q4KJK2</accession>
<organism>
    <name type="scientific">Pseudomonas fluorescens (strain ATCC BAA-477 / NRRL B-23932 / Pf-5)</name>
    <dbReference type="NCBI Taxonomy" id="220664"/>
    <lineage>
        <taxon>Bacteria</taxon>
        <taxon>Pseudomonadati</taxon>
        <taxon>Pseudomonadota</taxon>
        <taxon>Gammaproteobacteria</taxon>
        <taxon>Pseudomonadales</taxon>
        <taxon>Pseudomonadaceae</taxon>
        <taxon>Pseudomonas</taxon>
    </lineage>
</organism>
<keyword id="KW-0021">Allosteric enzyme</keyword>
<keyword id="KW-0963">Cytoplasm</keyword>
<keyword id="KW-0378">Hydrolase</keyword>
<keyword id="KW-0479">Metal-binding</keyword>
<keyword id="KW-0645">Protease</keyword>
<keyword id="KW-0915">Sodium</keyword>
<keyword id="KW-0346">Stress response</keyword>
<keyword id="KW-0888">Threonine protease</keyword>
<name>HSLV_PSEF5</name>
<protein>
    <recommendedName>
        <fullName evidence="1">ATP-dependent protease subunit HslV</fullName>
        <ecNumber evidence="1">3.4.25.2</ecNumber>
    </recommendedName>
</protein>
<sequence length="176" mass="18721">MTTIVSVRRHGKVVMGGDGQVSLGNTVMKGNAKKVRRLYHGQVIAGFAGATADAFTLFERFEGQLEKHQGHLVRAAVELAKEWRTDRSLSRLEAMLAVANKDASLIITGNGDVVEPEDGLIAMGSGGAYAQAAASALLKKTDLSAREIVETALGIAGDICVFTNHTQTIEEQDLAE</sequence>
<evidence type="ECO:0000255" key="1">
    <source>
        <dbReference type="HAMAP-Rule" id="MF_00248"/>
    </source>
</evidence>